<name>PARA_CHLMU</name>
<reference key="1">
    <citation type="journal article" date="2000" name="Nucleic Acids Res.">
        <title>Genome sequences of Chlamydia trachomatis MoPn and Chlamydia pneumoniae AR39.</title>
        <authorList>
            <person name="Read T.D."/>
            <person name="Brunham R.C."/>
            <person name="Shen C."/>
            <person name="Gill S.R."/>
            <person name="Heidelberg J.F."/>
            <person name="White O."/>
            <person name="Hickey E.K."/>
            <person name="Peterson J.D."/>
            <person name="Utterback T.R."/>
            <person name="Berry K.J."/>
            <person name="Bass S."/>
            <person name="Linher K.D."/>
            <person name="Weidman J.F."/>
            <person name="Khouri H.M."/>
            <person name="Craven B."/>
            <person name="Bowman C."/>
            <person name="Dodson R.J."/>
            <person name="Gwinn M.L."/>
            <person name="Nelson W.C."/>
            <person name="DeBoy R.T."/>
            <person name="Kolonay J.F."/>
            <person name="McClarty G."/>
            <person name="Salzberg S.L."/>
            <person name="Eisen J.A."/>
            <person name="Fraser C.M."/>
        </authorList>
    </citation>
    <scope>NUCLEOTIDE SEQUENCE [LARGE SCALE GENOMIC DNA]</scope>
    <source>
        <strain>MoPn / Nigg</strain>
    </source>
</reference>
<sequence length="255" mass="28104">MKTIAVNSFKGGTAKTSTTLHLGAALAQYHKARVLLIDFDAQANLTAGLGLDPDCYDSLAVVLQGEKQISEVIRSIDSSGLDLIPADTWLERVEVSGSLAADRYSHERLKTILSTIEHQYDYVIIDTPPSLCWLTESALIAAQHALICATPEFYSVKGLERLATFIQGISSRHPLNILGVTLSFWNYRGKNNAAFTELIQKTFPGKLLNTRIRRDITISEAAIHGKPVFSTAPSARASEDYLKLTEELLFLLRDI</sequence>
<protein>
    <recommendedName>
        <fullName>ParA family protein TC_0871</fullName>
    </recommendedName>
</protein>
<accession>Q9PJF8</accession>
<organism>
    <name type="scientific">Chlamydia muridarum (strain MoPn / Nigg)</name>
    <dbReference type="NCBI Taxonomy" id="243161"/>
    <lineage>
        <taxon>Bacteria</taxon>
        <taxon>Pseudomonadati</taxon>
        <taxon>Chlamydiota</taxon>
        <taxon>Chlamydiia</taxon>
        <taxon>Chlamydiales</taxon>
        <taxon>Chlamydiaceae</taxon>
        <taxon>Chlamydia/Chlamydophila group</taxon>
        <taxon>Chlamydia</taxon>
    </lineage>
</organism>
<evidence type="ECO:0000305" key="1"/>
<gene>
    <name type="ordered locus">TC_0871</name>
</gene>
<feature type="chain" id="PRO_0000201983" description="ParA family protein TC_0871">
    <location>
        <begin position="1"/>
        <end position="255"/>
    </location>
</feature>
<proteinExistence type="inferred from homology"/>
<comment type="similarity">
    <text evidence="1">Belongs to the ParA family.</text>
</comment>
<dbReference type="EMBL" id="AE002160">
    <property type="protein sequence ID" value="AAF39667.1"/>
    <property type="molecule type" value="Genomic_DNA"/>
</dbReference>
<dbReference type="PIR" id="B81656">
    <property type="entry name" value="B81656"/>
</dbReference>
<dbReference type="RefSeq" id="WP_010231805.1">
    <property type="nucleotide sequence ID" value="NZ_CP063055.1"/>
</dbReference>
<dbReference type="SMR" id="Q9PJF8"/>
<dbReference type="GeneID" id="1246239"/>
<dbReference type="KEGG" id="cmu:TC_0871"/>
<dbReference type="eggNOG" id="COG1192">
    <property type="taxonomic scope" value="Bacteria"/>
</dbReference>
<dbReference type="HOGENOM" id="CLU_037612_1_4_0"/>
<dbReference type="OrthoDB" id="9815116at2"/>
<dbReference type="Proteomes" id="UP000000800">
    <property type="component" value="Chromosome"/>
</dbReference>
<dbReference type="CDD" id="cd02042">
    <property type="entry name" value="ParAB_family"/>
    <property type="match status" value="1"/>
</dbReference>
<dbReference type="Gene3D" id="3.40.50.300">
    <property type="entry name" value="P-loop containing nucleotide triphosphate hydrolases"/>
    <property type="match status" value="1"/>
</dbReference>
<dbReference type="InterPro" id="IPR025669">
    <property type="entry name" value="AAA_dom"/>
</dbReference>
<dbReference type="InterPro" id="IPR050678">
    <property type="entry name" value="DNA_Partitioning_ATPase"/>
</dbReference>
<dbReference type="InterPro" id="IPR027417">
    <property type="entry name" value="P-loop_NTPase"/>
</dbReference>
<dbReference type="PANTHER" id="PTHR13696">
    <property type="entry name" value="P-LOOP CONTAINING NUCLEOSIDE TRIPHOSPHATE HYDROLASE"/>
    <property type="match status" value="1"/>
</dbReference>
<dbReference type="PANTHER" id="PTHR13696:SF52">
    <property type="entry name" value="PARA FAMILY PROTEIN CT_582"/>
    <property type="match status" value="1"/>
</dbReference>
<dbReference type="Pfam" id="PF13614">
    <property type="entry name" value="AAA_31"/>
    <property type="match status" value="1"/>
</dbReference>
<dbReference type="SUPFAM" id="SSF52540">
    <property type="entry name" value="P-loop containing nucleoside triphosphate hydrolases"/>
    <property type="match status" value="1"/>
</dbReference>